<feature type="chain" id="PRO_0000461286" description="Adenylate kinase 2">
    <location>
        <begin position="1"/>
        <end position="239"/>
    </location>
</feature>
<feature type="region of interest" description="NMP" evidence="2">
    <location>
        <begin position="49"/>
        <end position="78"/>
    </location>
</feature>
<feature type="region of interest" description="LID" evidence="2">
    <location>
        <begin position="145"/>
        <end position="182"/>
    </location>
</feature>
<feature type="binding site" evidence="2">
    <location>
        <begin position="29"/>
        <end position="34"/>
    </location>
    <ligand>
        <name>ATP</name>
        <dbReference type="ChEBI" id="CHEBI:30616"/>
    </ligand>
</feature>
<feature type="binding site" evidence="2">
    <location>
        <position position="50"/>
    </location>
    <ligand>
        <name>AMP</name>
        <dbReference type="ChEBI" id="CHEBI:456215"/>
    </ligand>
</feature>
<feature type="binding site" evidence="2">
    <location>
        <position position="55"/>
    </location>
    <ligand>
        <name>AMP</name>
        <dbReference type="ChEBI" id="CHEBI:456215"/>
    </ligand>
</feature>
<feature type="binding site" evidence="2">
    <location>
        <begin position="76"/>
        <end position="78"/>
    </location>
    <ligand>
        <name>AMP</name>
        <dbReference type="ChEBI" id="CHEBI:456215"/>
    </ligand>
</feature>
<feature type="binding site" evidence="2">
    <location>
        <begin position="104"/>
        <end position="107"/>
    </location>
    <ligand>
        <name>AMP</name>
        <dbReference type="ChEBI" id="CHEBI:456215"/>
    </ligand>
</feature>
<feature type="binding site" evidence="2">
    <location>
        <position position="111"/>
    </location>
    <ligand>
        <name>AMP</name>
        <dbReference type="ChEBI" id="CHEBI:456215"/>
    </ligand>
</feature>
<feature type="binding site" evidence="2">
    <location>
        <position position="146"/>
    </location>
    <ligand>
        <name>ATP</name>
        <dbReference type="ChEBI" id="CHEBI:30616"/>
    </ligand>
</feature>
<feature type="binding site" evidence="2">
    <location>
        <begin position="155"/>
        <end position="156"/>
    </location>
    <ligand>
        <name>ATP</name>
        <dbReference type="ChEBI" id="CHEBI:30616"/>
    </ligand>
</feature>
<feature type="binding site" evidence="2">
    <location>
        <position position="179"/>
    </location>
    <ligand>
        <name>AMP</name>
        <dbReference type="ChEBI" id="CHEBI:456215"/>
    </ligand>
</feature>
<feature type="binding site" evidence="2">
    <location>
        <position position="190"/>
    </location>
    <ligand>
        <name>AMP</name>
        <dbReference type="ChEBI" id="CHEBI:456215"/>
    </ligand>
</feature>
<gene>
    <name evidence="4" type="ORF">Smp_061940</name>
</gene>
<sequence>MLYDFASWYRRWRFGEGKRIDLVLIGPPGSGKGTQAVKIAERYNICHLSTGDILRAIIASGSELGQKVQKITESGGLVSDDIVCDLIAQKINSPECKNGLLFDGFPRTIEQAKKLDNLLRDRQIHLLAALEFKLDPSILEKRICGRLFHLASGRSYHELFNPPKVPMVDDITGDRLVHRSDDKPEALKKRLYEYDKNVAPILHFYESQNKLLRINANKDVNQVFSDIQELVRTKLAEEK</sequence>
<name>KAD2_SCHMA</name>
<accession>A0A3Q0KGQ7</accession>
<reference evidence="7" key="1">
    <citation type="journal article" date="2012" name="PLoS Negl. Trop. Dis.">
        <title>A systematically improved high quality genome and transcriptome of the human blood fluke Schistosoma mansoni.</title>
        <authorList>
            <person name="Protasio A.V."/>
            <person name="Tsai I.J."/>
            <person name="Babbage A."/>
            <person name="Nichol S."/>
            <person name="Hunt M."/>
            <person name="Aslett M.A."/>
            <person name="De Silva N."/>
            <person name="Velarde G.S."/>
            <person name="Anderson T.J."/>
            <person name="Clark R.C."/>
            <person name="Davidson C."/>
            <person name="Dillon G.P."/>
            <person name="Holroyd N.E."/>
            <person name="LoVerde P.T."/>
            <person name="Lloyd C."/>
            <person name="McQuillan J."/>
            <person name="Oliveira G."/>
            <person name="Otto T.D."/>
            <person name="Parker-Manuel S.J."/>
            <person name="Quail M.A."/>
            <person name="Wilson R.A."/>
            <person name="Zerlotini A."/>
            <person name="Dunne D.W."/>
            <person name="Berriman M."/>
        </authorList>
    </citation>
    <scope>NUCLEOTIDE SEQUENCE [LARGE SCALE GENOMIC DNA]</scope>
    <source>
        <strain evidence="7">Puerto Rican</strain>
    </source>
</reference>
<reference key="2">
    <citation type="journal article" date="2012" name="Mol. Biochem. Parasitol.">
        <title>Structural and kinetic studies of Schistosoma mansoni adenylate kinases.</title>
        <authorList>
            <person name="de Almeida Marques I."/>
            <person name="Romanello L."/>
            <person name="DeMarco R."/>
            <person name="D'Muniz Pereira H."/>
        </authorList>
    </citation>
    <scope>FUNCTION</scope>
    <scope>CATALYTIC ACTIVITY</scope>
    <scope>BIOPHYSICOCHEMICAL PROPERTIES</scope>
    <scope>PATHWAY</scope>
    <scope>SUBUNIT</scope>
</reference>
<evidence type="ECO:0000250" key="1">
    <source>
        <dbReference type="UniProtKB" id="P05081"/>
    </source>
</evidence>
<evidence type="ECO:0000250" key="2">
    <source>
        <dbReference type="UniProtKB" id="P07170"/>
    </source>
</evidence>
<evidence type="ECO:0000269" key="3">
    <source>
    </source>
</evidence>
<evidence type="ECO:0000303" key="4">
    <source>
    </source>
</evidence>
<evidence type="ECO:0000305" key="5"/>
<evidence type="ECO:0000305" key="6">
    <source>
    </source>
</evidence>
<evidence type="ECO:0000312" key="7">
    <source>
        <dbReference type="Proteomes" id="UP000008854"/>
    </source>
</evidence>
<evidence type="ECO:0000312" key="8">
    <source>
        <dbReference type="WBParaSite" id="Smp_061940.1"/>
    </source>
</evidence>
<organism evidence="7 8">
    <name type="scientific">Schistosoma mansoni</name>
    <name type="common">Blood fluke</name>
    <dbReference type="NCBI Taxonomy" id="6183"/>
    <lineage>
        <taxon>Eukaryota</taxon>
        <taxon>Metazoa</taxon>
        <taxon>Spiralia</taxon>
        <taxon>Lophotrochozoa</taxon>
        <taxon>Platyhelminthes</taxon>
        <taxon>Trematoda</taxon>
        <taxon>Digenea</taxon>
        <taxon>Strigeidida</taxon>
        <taxon>Schistosomatoidea</taxon>
        <taxon>Schistosomatidae</taxon>
        <taxon>Schistosoma</taxon>
    </lineage>
</organism>
<dbReference type="EC" id="2.7.4.3" evidence="3"/>
<dbReference type="EMBL" id="OU426848">
    <property type="status" value="NOT_ANNOTATED_CDS"/>
    <property type="molecule type" value="Genomic_DNA"/>
</dbReference>
<dbReference type="SMR" id="A0A3Q0KGQ7"/>
<dbReference type="FunCoup" id="A0A3Q0KGQ7">
    <property type="interactions" value="1566"/>
</dbReference>
<dbReference type="STRING" id="6183.A0A3Q0KGQ7"/>
<dbReference type="EnsemblMetazoa" id="Smp_061940.1">
    <property type="protein sequence ID" value="Smp_061940.1"/>
    <property type="gene ID" value="Smp_061940"/>
</dbReference>
<dbReference type="WBParaSite" id="Smp_061940.1">
    <property type="protein sequence ID" value="Smp_061940.1"/>
    <property type="gene ID" value="Smp_061940"/>
</dbReference>
<dbReference type="InParanoid" id="A0A3Q0KGQ7"/>
<dbReference type="OMA" id="VYHEQTA"/>
<dbReference type="UniPathway" id="UPA00488"/>
<dbReference type="Proteomes" id="UP000008854">
    <property type="component" value="Unassembled WGS sequence"/>
</dbReference>
<dbReference type="ExpressionAtlas" id="A0A3Q0KGQ7">
    <property type="expression patterns" value="differential"/>
</dbReference>
<dbReference type="GO" id="GO:0005737">
    <property type="term" value="C:cytoplasm"/>
    <property type="evidence" value="ECO:0000250"/>
    <property type="project" value="UniProtKB"/>
</dbReference>
<dbReference type="GO" id="GO:0005829">
    <property type="term" value="C:cytosol"/>
    <property type="evidence" value="ECO:0000250"/>
    <property type="project" value="UniProtKB"/>
</dbReference>
<dbReference type="GO" id="GO:0004017">
    <property type="term" value="F:adenylate kinase activity"/>
    <property type="evidence" value="ECO:0000314"/>
    <property type="project" value="UniProtKB"/>
</dbReference>
<dbReference type="GO" id="GO:0016208">
    <property type="term" value="F:AMP binding"/>
    <property type="evidence" value="ECO:0000250"/>
    <property type="project" value="UniProtKB"/>
</dbReference>
<dbReference type="GO" id="GO:0005524">
    <property type="term" value="F:ATP binding"/>
    <property type="evidence" value="ECO:0000250"/>
    <property type="project" value="UniProtKB"/>
</dbReference>
<dbReference type="GO" id="GO:0046083">
    <property type="term" value="P:adenine metabolic process"/>
    <property type="evidence" value="ECO:0000250"/>
    <property type="project" value="UniProtKB"/>
</dbReference>
<dbReference type="GO" id="GO:0006172">
    <property type="term" value="P:ADP biosynthetic process"/>
    <property type="evidence" value="ECO:0000314"/>
    <property type="project" value="UniProtKB"/>
</dbReference>
<dbReference type="GO" id="GO:0006756">
    <property type="term" value="P:AMP phosphorylation"/>
    <property type="evidence" value="ECO:0000314"/>
    <property type="project" value="UniProtKB"/>
</dbReference>
<dbReference type="GO" id="GO:0006166">
    <property type="term" value="P:purine ribonucleoside salvage"/>
    <property type="evidence" value="ECO:0007669"/>
    <property type="project" value="UniProtKB-KW"/>
</dbReference>
<dbReference type="CDD" id="cd01428">
    <property type="entry name" value="ADK"/>
    <property type="match status" value="1"/>
</dbReference>
<dbReference type="FunFam" id="3.40.50.300:FF:000106">
    <property type="entry name" value="Adenylate kinase mitochondrial"/>
    <property type="match status" value="1"/>
</dbReference>
<dbReference type="Gene3D" id="3.40.50.300">
    <property type="entry name" value="P-loop containing nucleotide triphosphate hydrolases"/>
    <property type="match status" value="1"/>
</dbReference>
<dbReference type="HAMAP" id="MF_00235">
    <property type="entry name" value="Adenylate_kinase_Adk"/>
    <property type="match status" value="1"/>
</dbReference>
<dbReference type="InterPro" id="IPR006259">
    <property type="entry name" value="Adenyl_kin_sub"/>
</dbReference>
<dbReference type="InterPro" id="IPR000850">
    <property type="entry name" value="Adenylat/UMP-CMP_kin"/>
</dbReference>
<dbReference type="InterPro" id="IPR033690">
    <property type="entry name" value="Adenylat_kinase_CS"/>
</dbReference>
<dbReference type="InterPro" id="IPR007862">
    <property type="entry name" value="Adenylate_kinase_lid-dom"/>
</dbReference>
<dbReference type="InterPro" id="IPR027417">
    <property type="entry name" value="P-loop_NTPase"/>
</dbReference>
<dbReference type="NCBIfam" id="TIGR01351">
    <property type="entry name" value="adk"/>
    <property type="match status" value="1"/>
</dbReference>
<dbReference type="NCBIfam" id="NF001381">
    <property type="entry name" value="PRK00279.1-3"/>
    <property type="match status" value="1"/>
</dbReference>
<dbReference type="PANTHER" id="PTHR23359">
    <property type="entry name" value="NUCLEOTIDE KINASE"/>
    <property type="match status" value="1"/>
</dbReference>
<dbReference type="Pfam" id="PF00406">
    <property type="entry name" value="ADK"/>
    <property type="match status" value="1"/>
</dbReference>
<dbReference type="Pfam" id="PF05191">
    <property type="entry name" value="ADK_lid"/>
    <property type="match status" value="1"/>
</dbReference>
<dbReference type="PRINTS" id="PR00094">
    <property type="entry name" value="ADENYLTKNASE"/>
</dbReference>
<dbReference type="SUPFAM" id="SSF52540">
    <property type="entry name" value="P-loop containing nucleoside triphosphate hydrolases"/>
    <property type="match status" value="1"/>
</dbReference>
<dbReference type="PROSITE" id="PS00113">
    <property type="entry name" value="ADENYLATE_KINASE"/>
    <property type="match status" value="1"/>
</dbReference>
<protein>
    <recommendedName>
        <fullName evidence="4">Adenylate kinase 2</fullName>
        <shortName evidence="4">ADK2</shortName>
        <shortName evidence="5">AK 2</shortName>
        <ecNumber evidence="3">2.7.4.3</ecNumber>
    </recommendedName>
    <alternativeName>
        <fullName evidence="5">ATP-AMP transphosphorylase 2</fullName>
    </alternativeName>
    <alternativeName>
        <fullName evidence="5">ATP:AMP phosphotransferase</fullName>
    </alternativeName>
    <alternativeName>
        <fullName evidence="5">Adenylate monophosphate kinase</fullName>
    </alternativeName>
    <alternativeName>
        <fullName evidence="4">SmADK2</fullName>
    </alternativeName>
</protein>
<keyword id="KW-0067">ATP-binding</keyword>
<keyword id="KW-0963">Cytoplasm</keyword>
<keyword id="KW-0418">Kinase</keyword>
<keyword id="KW-0545">Nucleotide biosynthesis</keyword>
<keyword id="KW-0547">Nucleotide-binding</keyword>
<keyword id="KW-0660">Purine salvage</keyword>
<keyword id="KW-1185">Reference proteome</keyword>
<keyword id="KW-0808">Transferase</keyword>
<comment type="function">
    <text evidence="2 3">Catalyzes the reversible transfer of the terminal phosphate group between ATP and AMP (PubMed:22841753). Plays an important role in cellular energy homeostasis and in adenine nucleotide metabolism (By similarity).</text>
</comment>
<comment type="catalytic activity">
    <reaction evidence="3">
        <text>AMP + ATP = 2 ADP</text>
        <dbReference type="Rhea" id="RHEA:12973"/>
        <dbReference type="ChEBI" id="CHEBI:30616"/>
        <dbReference type="ChEBI" id="CHEBI:456215"/>
        <dbReference type="ChEBI" id="CHEBI:456216"/>
        <dbReference type="EC" id="2.7.4.3"/>
    </reaction>
</comment>
<comment type="cofactor">
    <cofactor evidence="1">
        <name>Mg(2+)</name>
        <dbReference type="ChEBI" id="CHEBI:18420"/>
    </cofactor>
</comment>
<comment type="biophysicochemical properties">
    <kinetics>
        <KM evidence="3">37 uM for AMP (at pH 7.4)</KM>
        <KM evidence="3">13 uM for ATP (at pH 7.4)</KM>
        <text evidence="3">kcat is 8.3 sec(-1) with AMP as substrate. kcat is 5.0 sec(-1) with ATP as substrate.</text>
    </kinetics>
</comment>
<comment type="pathway">
    <text evidence="6">Purine metabolism; purine nucleotide biosynthesis.</text>
</comment>
<comment type="subunit">
    <text evidence="3">Monomer.</text>
</comment>
<comment type="subcellular location">
    <subcellularLocation>
        <location evidence="2">Cytoplasm</location>
        <location evidence="2">Cytosol</location>
    </subcellularLocation>
</comment>
<comment type="domain">
    <text evidence="2">Consists of three domains, a large central CORE domain and two small peripheral domains, NMPbind and LID, which undergo movements during catalysis. The LID domain closes over the site of phosphoryl transfer upon ATP binding. Assembling and dissambling the active center during each catalytic cycle provides an effective means to prevent ATP hydrolysis.</text>
</comment>
<comment type="similarity">
    <text evidence="5">Belongs to the adenylate kinase family. AK2 subfamily.</text>
</comment>
<proteinExistence type="evidence at protein level"/>